<dbReference type="EMBL" id="U55992">
    <property type="protein sequence ID" value="AAC47307.1"/>
    <property type="molecule type" value="mRNA"/>
</dbReference>
<dbReference type="RefSeq" id="XP_018648940.1">
    <property type="nucleotide sequence ID" value="XM_018794537.1"/>
</dbReference>
<dbReference type="SMR" id="Q94758"/>
<dbReference type="STRING" id="6183.Q94758"/>
<dbReference type="EnsemblMetazoa" id="Smp_095520.1">
    <property type="protein sequence ID" value="Smp_095520.1"/>
    <property type="gene ID" value="Smp_095520"/>
</dbReference>
<dbReference type="KEGG" id="smm:Smp_095520"/>
<dbReference type="WBParaSite" id="Smp_095520.1">
    <property type="protein sequence ID" value="Smp_095520.1"/>
    <property type="gene ID" value="Smp_095520"/>
</dbReference>
<dbReference type="CTD" id="8341644"/>
<dbReference type="eggNOG" id="KOG3430">
    <property type="taxonomic scope" value="Eukaryota"/>
</dbReference>
<dbReference type="HOGENOM" id="CLU_070944_4_0_1"/>
<dbReference type="InParanoid" id="Q94758"/>
<dbReference type="OMA" id="KYHPTWH"/>
<dbReference type="OrthoDB" id="10033309at2759"/>
<dbReference type="PhylomeDB" id="Q94758"/>
<dbReference type="Proteomes" id="UP000008854">
    <property type="component" value="Unassembled WGS sequence"/>
</dbReference>
<dbReference type="ExpressionAtlas" id="Q94758">
    <property type="expression patterns" value="differential"/>
</dbReference>
<dbReference type="GO" id="GO:0005737">
    <property type="term" value="C:cytoplasm"/>
    <property type="evidence" value="ECO:0007669"/>
    <property type="project" value="UniProtKB-KW"/>
</dbReference>
<dbReference type="GO" id="GO:0005868">
    <property type="term" value="C:cytoplasmic dynein complex"/>
    <property type="evidence" value="ECO:0007669"/>
    <property type="project" value="TreeGrafter"/>
</dbReference>
<dbReference type="GO" id="GO:0005874">
    <property type="term" value="C:microtubule"/>
    <property type="evidence" value="ECO:0007669"/>
    <property type="project" value="UniProtKB-KW"/>
</dbReference>
<dbReference type="GO" id="GO:0045505">
    <property type="term" value="F:dynein intermediate chain binding"/>
    <property type="evidence" value="ECO:0007669"/>
    <property type="project" value="TreeGrafter"/>
</dbReference>
<dbReference type="GO" id="GO:0007017">
    <property type="term" value="P:microtubule-based process"/>
    <property type="evidence" value="ECO:0007669"/>
    <property type="project" value="InterPro"/>
</dbReference>
<dbReference type="CDD" id="cd21452">
    <property type="entry name" value="DLC-like_DYNLL1_DYNLL2"/>
    <property type="match status" value="1"/>
</dbReference>
<dbReference type="FunFam" id="3.30.740.10:FF:000001">
    <property type="entry name" value="Dynein light chain"/>
    <property type="match status" value="1"/>
</dbReference>
<dbReference type="Gene3D" id="3.30.740.10">
    <property type="entry name" value="Protein Inhibitor Of Neuronal Nitric Oxide Synthase"/>
    <property type="match status" value="1"/>
</dbReference>
<dbReference type="InterPro" id="IPR037177">
    <property type="entry name" value="DLC_sf"/>
</dbReference>
<dbReference type="InterPro" id="IPR019763">
    <property type="entry name" value="Dynein_light_1/2_CS"/>
</dbReference>
<dbReference type="InterPro" id="IPR001372">
    <property type="entry name" value="Dynein_light_chain_typ-1/2"/>
</dbReference>
<dbReference type="PANTHER" id="PTHR11886">
    <property type="entry name" value="DYNEIN LIGHT CHAIN"/>
    <property type="match status" value="1"/>
</dbReference>
<dbReference type="PANTHER" id="PTHR11886:SF35">
    <property type="entry name" value="DYNEIN LIGHT CHAIN"/>
    <property type="match status" value="1"/>
</dbReference>
<dbReference type="Pfam" id="PF01221">
    <property type="entry name" value="Dynein_light"/>
    <property type="match status" value="1"/>
</dbReference>
<dbReference type="SMART" id="SM01375">
    <property type="entry name" value="Dynein_light"/>
    <property type="match status" value="1"/>
</dbReference>
<dbReference type="SUPFAM" id="SSF54648">
    <property type="entry name" value="DLC"/>
    <property type="match status" value="1"/>
</dbReference>
<dbReference type="PROSITE" id="PS01239">
    <property type="entry name" value="DYNEIN_LIGHT_1"/>
    <property type="match status" value="1"/>
</dbReference>
<gene>
    <name type="primary">DLC</name>
</gene>
<evidence type="ECO:0000250" key="1"/>
<evidence type="ECO:0000305" key="2"/>
<reference key="1">
    <citation type="journal article" date="1996" name="J. Biol. Chem.">
        <title>Molecular identification of a Schistosoma mansoni tegumental protein with similarity to cytoplasmic dynein light chains.</title>
        <authorList>
            <person name="Hoffmann K.F."/>
            <person name="Strand M."/>
        </authorList>
    </citation>
    <scope>NUCLEOTIDE SEQUENCE [MRNA]</scope>
    <scope>PROTEIN SEQUENCE OF 7-12; 18 AND 61-77</scope>
    <source>
        <strain>Puerto Rican</strain>
    </source>
</reference>
<organism>
    <name type="scientific">Schistosoma mansoni</name>
    <name type="common">Blood fluke</name>
    <dbReference type="NCBI Taxonomy" id="6183"/>
    <lineage>
        <taxon>Eukaryota</taxon>
        <taxon>Metazoa</taxon>
        <taxon>Spiralia</taxon>
        <taxon>Lophotrochozoa</taxon>
        <taxon>Platyhelminthes</taxon>
        <taxon>Trematoda</taxon>
        <taxon>Digenea</taxon>
        <taxon>Strigeidida</taxon>
        <taxon>Schistosomatoidea</taxon>
        <taxon>Schistosomatidae</taxon>
        <taxon>Schistosoma</taxon>
    </lineage>
</organism>
<sequence length="89" mass="10400">MSERKAVIKNADMSEEMQEDAIHIAAGAIDKHDLEKDIAANIKKDFDRKYHPTWHCIVGRHFGSYVTHETHNFIYFYLDDRAFLLFKSG</sequence>
<protein>
    <recommendedName>
        <fullName>Dynein light chain</fullName>
    </recommendedName>
</protein>
<proteinExistence type="evidence at protein level"/>
<keyword id="KW-0963">Cytoplasm</keyword>
<keyword id="KW-0206">Cytoskeleton</keyword>
<keyword id="KW-0903">Direct protein sequencing</keyword>
<keyword id="KW-0243">Dynein</keyword>
<keyword id="KW-0493">Microtubule</keyword>
<keyword id="KW-0505">Motor protein</keyword>
<keyword id="KW-1185">Reference proteome</keyword>
<name>DYL1_SCHMA</name>
<feature type="chain" id="PRO_0000195138" description="Dynein light chain">
    <location>
        <begin position="1"/>
        <end position="89"/>
    </location>
</feature>
<accession>Q94758</accession>
<comment type="function">
    <text evidence="1">Acts as a non-catalytic accessory component of a dynein complex.</text>
</comment>
<comment type="subcellular location">
    <subcellularLocation>
        <location evidence="1">Cytoplasm</location>
        <location evidence="1">Cytoskeleton</location>
    </subcellularLocation>
</comment>
<comment type="tissue specificity">
    <text>Tegument.</text>
</comment>
<comment type="developmental stage">
    <text>Schistosomula, lung stage worms, and adult worms.</text>
</comment>
<comment type="similarity">
    <text evidence="2">Belongs to the dynein light chain family.</text>
</comment>